<dbReference type="EC" id="6.3.5.3" evidence="1"/>
<dbReference type="EC" id="3.5.1.2" evidence="1"/>
<dbReference type="EMBL" id="AE006470">
    <property type="protein sequence ID" value="AAM72567.1"/>
    <property type="molecule type" value="Genomic_DNA"/>
</dbReference>
<dbReference type="RefSeq" id="NP_662225.1">
    <property type="nucleotide sequence ID" value="NC_002932.3"/>
</dbReference>
<dbReference type="RefSeq" id="WP_010933006.1">
    <property type="nucleotide sequence ID" value="NC_002932.3"/>
</dbReference>
<dbReference type="SMR" id="Q8KCS5"/>
<dbReference type="STRING" id="194439.CT1338"/>
<dbReference type="EnsemblBacteria" id="AAM72567">
    <property type="protein sequence ID" value="AAM72567"/>
    <property type="gene ID" value="CT1338"/>
</dbReference>
<dbReference type="KEGG" id="cte:CT1338"/>
<dbReference type="PATRIC" id="fig|194439.7.peg.1218"/>
<dbReference type="eggNOG" id="COG0047">
    <property type="taxonomic scope" value="Bacteria"/>
</dbReference>
<dbReference type="HOGENOM" id="CLU_001031_3_1_10"/>
<dbReference type="OrthoDB" id="9804441at2"/>
<dbReference type="UniPathway" id="UPA00074">
    <property type="reaction ID" value="UER00128"/>
</dbReference>
<dbReference type="Proteomes" id="UP000001007">
    <property type="component" value="Chromosome"/>
</dbReference>
<dbReference type="GO" id="GO:0005737">
    <property type="term" value="C:cytoplasm"/>
    <property type="evidence" value="ECO:0007669"/>
    <property type="project" value="UniProtKB-SubCell"/>
</dbReference>
<dbReference type="GO" id="GO:0005524">
    <property type="term" value="F:ATP binding"/>
    <property type="evidence" value="ECO:0007669"/>
    <property type="project" value="UniProtKB-KW"/>
</dbReference>
<dbReference type="GO" id="GO:0004359">
    <property type="term" value="F:glutaminase activity"/>
    <property type="evidence" value="ECO:0007669"/>
    <property type="project" value="UniProtKB-EC"/>
</dbReference>
<dbReference type="GO" id="GO:0004642">
    <property type="term" value="F:phosphoribosylformylglycinamidine synthase activity"/>
    <property type="evidence" value="ECO:0007669"/>
    <property type="project" value="UniProtKB-UniRule"/>
</dbReference>
<dbReference type="GO" id="GO:0006189">
    <property type="term" value="P:'de novo' IMP biosynthetic process"/>
    <property type="evidence" value="ECO:0007669"/>
    <property type="project" value="UniProtKB-UniRule"/>
</dbReference>
<dbReference type="CDD" id="cd01740">
    <property type="entry name" value="GATase1_FGAR_AT"/>
    <property type="match status" value="1"/>
</dbReference>
<dbReference type="Gene3D" id="3.40.50.880">
    <property type="match status" value="1"/>
</dbReference>
<dbReference type="HAMAP" id="MF_00421">
    <property type="entry name" value="PurQ"/>
    <property type="match status" value="1"/>
</dbReference>
<dbReference type="InterPro" id="IPR029062">
    <property type="entry name" value="Class_I_gatase-like"/>
</dbReference>
<dbReference type="InterPro" id="IPR010075">
    <property type="entry name" value="PRibForGlyAmidine_synth_PurQ"/>
</dbReference>
<dbReference type="NCBIfam" id="TIGR01737">
    <property type="entry name" value="FGAM_synth_I"/>
    <property type="match status" value="1"/>
</dbReference>
<dbReference type="NCBIfam" id="NF002957">
    <property type="entry name" value="PRK03619.1"/>
    <property type="match status" value="1"/>
</dbReference>
<dbReference type="PANTHER" id="PTHR47552">
    <property type="entry name" value="PHOSPHORIBOSYLFORMYLGLYCINAMIDINE SYNTHASE SUBUNIT PURQ"/>
    <property type="match status" value="1"/>
</dbReference>
<dbReference type="PANTHER" id="PTHR47552:SF1">
    <property type="entry name" value="PHOSPHORIBOSYLFORMYLGLYCINAMIDINE SYNTHASE SUBUNIT PURQ"/>
    <property type="match status" value="1"/>
</dbReference>
<dbReference type="Pfam" id="PF13507">
    <property type="entry name" value="GATase_5"/>
    <property type="match status" value="1"/>
</dbReference>
<dbReference type="PIRSF" id="PIRSF001586">
    <property type="entry name" value="FGAM_synth_I"/>
    <property type="match status" value="1"/>
</dbReference>
<dbReference type="SMART" id="SM01211">
    <property type="entry name" value="GATase_5"/>
    <property type="match status" value="1"/>
</dbReference>
<dbReference type="SUPFAM" id="SSF52317">
    <property type="entry name" value="Class I glutamine amidotransferase-like"/>
    <property type="match status" value="1"/>
</dbReference>
<dbReference type="PROSITE" id="PS51273">
    <property type="entry name" value="GATASE_TYPE_1"/>
    <property type="match status" value="1"/>
</dbReference>
<sequence>MADVTVGIVVFPGSNCDHDTEYAVASFPGVKPVMLWHNDHDLKGCDAVILPGGFSYGDYLRCGAIARFSPIMREVIDFAGKGRPVLGICNGFQVLVECGLLEGALIRNAGRRFVSRQTTISVANNATIFTDRYQKGEVLRVPVAHGEGNYYASPETIESLESNGQVVFRYTDAWGNATAEANFNGSMNNIAGIVNKQGNVLGLMPHPERASEKLLGSEDGRRLFESLFAHLAGA</sequence>
<protein>
    <recommendedName>
        <fullName evidence="1">Phosphoribosylformylglycinamidine synthase subunit PurQ</fullName>
        <shortName evidence="1">FGAM synthase</shortName>
        <ecNumber evidence="1">6.3.5.3</ecNumber>
    </recommendedName>
    <alternativeName>
        <fullName evidence="1">Formylglycinamide ribonucleotide amidotransferase subunit I</fullName>
        <shortName evidence="1">FGAR amidotransferase I</shortName>
        <shortName evidence="1">FGAR-AT I</shortName>
    </alternativeName>
    <alternativeName>
        <fullName evidence="1">Glutaminase PurQ</fullName>
        <ecNumber evidence="1">3.5.1.2</ecNumber>
    </alternativeName>
    <alternativeName>
        <fullName evidence="1">Phosphoribosylformylglycinamidine synthase subunit I</fullName>
    </alternativeName>
</protein>
<reference key="1">
    <citation type="journal article" date="2002" name="Proc. Natl. Acad. Sci. U.S.A.">
        <title>The complete genome sequence of Chlorobium tepidum TLS, a photosynthetic, anaerobic, green-sulfur bacterium.</title>
        <authorList>
            <person name="Eisen J.A."/>
            <person name="Nelson K.E."/>
            <person name="Paulsen I.T."/>
            <person name="Heidelberg J.F."/>
            <person name="Wu M."/>
            <person name="Dodson R.J."/>
            <person name="DeBoy R.T."/>
            <person name="Gwinn M.L."/>
            <person name="Nelson W.C."/>
            <person name="Haft D.H."/>
            <person name="Hickey E.K."/>
            <person name="Peterson J.D."/>
            <person name="Durkin A.S."/>
            <person name="Kolonay J.F."/>
            <person name="Yang F."/>
            <person name="Holt I.E."/>
            <person name="Umayam L.A."/>
            <person name="Mason T.M."/>
            <person name="Brenner M."/>
            <person name="Shea T.P."/>
            <person name="Parksey D.S."/>
            <person name="Nierman W.C."/>
            <person name="Feldblyum T.V."/>
            <person name="Hansen C.L."/>
            <person name="Craven M.B."/>
            <person name="Radune D."/>
            <person name="Vamathevan J.J."/>
            <person name="Khouri H.M."/>
            <person name="White O."/>
            <person name="Gruber T.M."/>
            <person name="Ketchum K.A."/>
            <person name="Venter J.C."/>
            <person name="Tettelin H."/>
            <person name="Bryant D.A."/>
            <person name="Fraser C.M."/>
        </authorList>
    </citation>
    <scope>NUCLEOTIDE SEQUENCE [LARGE SCALE GENOMIC DNA]</scope>
    <source>
        <strain>ATCC 49652 / DSM 12025 / NBRC 103806 / TLS</strain>
    </source>
</reference>
<feature type="chain" id="PRO_0000100548" description="Phosphoribosylformylglycinamidine synthase subunit PurQ">
    <location>
        <begin position="1"/>
        <end position="234"/>
    </location>
</feature>
<feature type="domain" description="Glutamine amidotransferase type-1" evidence="1">
    <location>
        <begin position="5"/>
        <end position="234"/>
    </location>
</feature>
<feature type="active site" description="Nucleophile" evidence="1">
    <location>
        <position position="89"/>
    </location>
</feature>
<feature type="active site" evidence="1">
    <location>
        <position position="206"/>
    </location>
</feature>
<feature type="active site" evidence="1">
    <location>
        <position position="208"/>
    </location>
</feature>
<name>PURQ_CHLTE</name>
<keyword id="KW-0067">ATP-binding</keyword>
<keyword id="KW-0963">Cytoplasm</keyword>
<keyword id="KW-0315">Glutamine amidotransferase</keyword>
<keyword id="KW-0378">Hydrolase</keyword>
<keyword id="KW-0436">Ligase</keyword>
<keyword id="KW-0547">Nucleotide-binding</keyword>
<keyword id="KW-0658">Purine biosynthesis</keyword>
<keyword id="KW-1185">Reference proteome</keyword>
<proteinExistence type="inferred from homology"/>
<organism>
    <name type="scientific">Chlorobaculum tepidum (strain ATCC 49652 / DSM 12025 / NBRC 103806 / TLS)</name>
    <name type="common">Chlorobium tepidum</name>
    <dbReference type="NCBI Taxonomy" id="194439"/>
    <lineage>
        <taxon>Bacteria</taxon>
        <taxon>Pseudomonadati</taxon>
        <taxon>Chlorobiota</taxon>
        <taxon>Chlorobiia</taxon>
        <taxon>Chlorobiales</taxon>
        <taxon>Chlorobiaceae</taxon>
        <taxon>Chlorobaculum</taxon>
    </lineage>
</organism>
<gene>
    <name evidence="1" type="primary">purQ</name>
    <name type="ordered locus">CT1338</name>
</gene>
<accession>Q8KCS5</accession>
<comment type="function">
    <text evidence="1">Part of the phosphoribosylformylglycinamidine synthase complex involved in the purines biosynthetic pathway. Catalyzes the ATP-dependent conversion of formylglycinamide ribonucleotide (FGAR) and glutamine to yield formylglycinamidine ribonucleotide (FGAM) and glutamate. The FGAM synthase complex is composed of three subunits. PurQ produces an ammonia molecule by converting glutamine to glutamate. PurL transfers the ammonia molecule to FGAR to form FGAM in an ATP-dependent manner. PurS interacts with PurQ and PurL and is thought to assist in the transfer of the ammonia molecule from PurQ to PurL.</text>
</comment>
<comment type="catalytic activity">
    <reaction evidence="1">
        <text>N(2)-formyl-N(1)-(5-phospho-beta-D-ribosyl)glycinamide + L-glutamine + ATP + H2O = 2-formamido-N(1)-(5-O-phospho-beta-D-ribosyl)acetamidine + L-glutamate + ADP + phosphate + H(+)</text>
        <dbReference type="Rhea" id="RHEA:17129"/>
        <dbReference type="ChEBI" id="CHEBI:15377"/>
        <dbReference type="ChEBI" id="CHEBI:15378"/>
        <dbReference type="ChEBI" id="CHEBI:29985"/>
        <dbReference type="ChEBI" id="CHEBI:30616"/>
        <dbReference type="ChEBI" id="CHEBI:43474"/>
        <dbReference type="ChEBI" id="CHEBI:58359"/>
        <dbReference type="ChEBI" id="CHEBI:147286"/>
        <dbReference type="ChEBI" id="CHEBI:147287"/>
        <dbReference type="ChEBI" id="CHEBI:456216"/>
        <dbReference type="EC" id="6.3.5.3"/>
    </reaction>
</comment>
<comment type="catalytic activity">
    <reaction evidence="1">
        <text>L-glutamine + H2O = L-glutamate + NH4(+)</text>
        <dbReference type="Rhea" id="RHEA:15889"/>
        <dbReference type="ChEBI" id="CHEBI:15377"/>
        <dbReference type="ChEBI" id="CHEBI:28938"/>
        <dbReference type="ChEBI" id="CHEBI:29985"/>
        <dbReference type="ChEBI" id="CHEBI:58359"/>
        <dbReference type="EC" id="3.5.1.2"/>
    </reaction>
</comment>
<comment type="pathway">
    <text evidence="1">Purine metabolism; IMP biosynthesis via de novo pathway; 5-amino-1-(5-phospho-D-ribosyl)imidazole from N(2)-formyl-N(1)-(5-phospho-D-ribosyl)glycinamide: step 1/2.</text>
</comment>
<comment type="subunit">
    <text evidence="1">Part of the FGAM synthase complex composed of 1 PurL, 1 PurQ and 2 PurS subunits.</text>
</comment>
<comment type="subcellular location">
    <subcellularLocation>
        <location evidence="1">Cytoplasm</location>
    </subcellularLocation>
</comment>
<evidence type="ECO:0000255" key="1">
    <source>
        <dbReference type="HAMAP-Rule" id="MF_00421"/>
    </source>
</evidence>